<feature type="chain" id="PRO_1000166493" description="Small ribosomal subunit protein uS17">
    <location>
        <begin position="1"/>
        <end position="80"/>
    </location>
</feature>
<evidence type="ECO:0000255" key="1">
    <source>
        <dbReference type="HAMAP-Rule" id="MF_01345"/>
    </source>
</evidence>
<evidence type="ECO:0000305" key="2"/>
<comment type="function">
    <text evidence="1">One of the primary rRNA binding proteins, it binds specifically to the 5'-end of 16S ribosomal RNA.</text>
</comment>
<comment type="subunit">
    <text evidence="1">Part of the 30S ribosomal subunit.</text>
</comment>
<comment type="similarity">
    <text evidence="1">Belongs to the universal ribosomal protein uS17 family.</text>
</comment>
<protein>
    <recommendedName>
        <fullName evidence="1">Small ribosomal subunit protein uS17</fullName>
    </recommendedName>
    <alternativeName>
        <fullName evidence="2">30S ribosomal protein S17</fullName>
    </alternativeName>
</protein>
<organism>
    <name type="scientific">Cereibacter sphaeroides (strain KD131 / KCTC 12085)</name>
    <name type="common">Rhodobacter sphaeroides</name>
    <dbReference type="NCBI Taxonomy" id="557760"/>
    <lineage>
        <taxon>Bacteria</taxon>
        <taxon>Pseudomonadati</taxon>
        <taxon>Pseudomonadota</taxon>
        <taxon>Alphaproteobacteria</taxon>
        <taxon>Rhodobacterales</taxon>
        <taxon>Paracoccaceae</taxon>
        <taxon>Cereibacter</taxon>
    </lineage>
</organism>
<name>RS17_CERSK</name>
<reference key="1">
    <citation type="journal article" date="2009" name="J. Bacteriol.">
        <title>Complete genome sequence of Rhodobacter sphaeroides KD131.</title>
        <authorList>
            <person name="Lim S.-K."/>
            <person name="Kim S.J."/>
            <person name="Cha S.H."/>
            <person name="Oh Y.-K."/>
            <person name="Rhee H.-J."/>
            <person name="Kim M.-S."/>
            <person name="Lee J.K."/>
        </authorList>
    </citation>
    <scope>NUCLEOTIDE SEQUENCE [LARGE SCALE GENOMIC DNA]</scope>
    <source>
        <strain>KD131 / KCTC 12085</strain>
    </source>
</reference>
<proteinExistence type="inferred from homology"/>
<accession>B9KLA0</accession>
<keyword id="KW-0687">Ribonucleoprotein</keyword>
<keyword id="KW-0689">Ribosomal protein</keyword>
<keyword id="KW-0694">RNA-binding</keyword>
<keyword id="KW-0699">rRNA-binding</keyword>
<gene>
    <name evidence="1" type="primary">rpsQ</name>
    <name type="ordered locus">RSKD131_0023</name>
</gene>
<sequence>MPKRILQGTVTSDKNEQTVTVLVERRFKHPLLKKTVRLSKKYRAHDPENQFKVGDIVRIEECAPISKTKRWKVVTDAVVA</sequence>
<dbReference type="EMBL" id="CP001150">
    <property type="protein sequence ID" value="ACL99882.1"/>
    <property type="molecule type" value="Genomic_DNA"/>
</dbReference>
<dbReference type="RefSeq" id="WP_002722502.1">
    <property type="nucleotide sequence ID" value="NC_011963.1"/>
</dbReference>
<dbReference type="SMR" id="B9KLA0"/>
<dbReference type="GeneID" id="67445509"/>
<dbReference type="KEGG" id="rsk:RSKD131_0023"/>
<dbReference type="HOGENOM" id="CLU_073626_1_1_5"/>
<dbReference type="GO" id="GO:0022627">
    <property type="term" value="C:cytosolic small ribosomal subunit"/>
    <property type="evidence" value="ECO:0007669"/>
    <property type="project" value="TreeGrafter"/>
</dbReference>
<dbReference type="GO" id="GO:0019843">
    <property type="term" value="F:rRNA binding"/>
    <property type="evidence" value="ECO:0007669"/>
    <property type="project" value="UniProtKB-UniRule"/>
</dbReference>
<dbReference type="GO" id="GO:0003735">
    <property type="term" value="F:structural constituent of ribosome"/>
    <property type="evidence" value="ECO:0007669"/>
    <property type="project" value="InterPro"/>
</dbReference>
<dbReference type="GO" id="GO:0006412">
    <property type="term" value="P:translation"/>
    <property type="evidence" value="ECO:0007669"/>
    <property type="project" value="UniProtKB-UniRule"/>
</dbReference>
<dbReference type="CDD" id="cd00364">
    <property type="entry name" value="Ribosomal_uS17"/>
    <property type="match status" value="1"/>
</dbReference>
<dbReference type="Gene3D" id="2.40.50.140">
    <property type="entry name" value="Nucleic acid-binding proteins"/>
    <property type="match status" value="1"/>
</dbReference>
<dbReference type="HAMAP" id="MF_01345_B">
    <property type="entry name" value="Ribosomal_uS17_B"/>
    <property type="match status" value="1"/>
</dbReference>
<dbReference type="InterPro" id="IPR012340">
    <property type="entry name" value="NA-bd_OB-fold"/>
</dbReference>
<dbReference type="InterPro" id="IPR000266">
    <property type="entry name" value="Ribosomal_uS17"/>
</dbReference>
<dbReference type="InterPro" id="IPR019984">
    <property type="entry name" value="Ribosomal_uS17_bact/chlr"/>
</dbReference>
<dbReference type="NCBIfam" id="NF004123">
    <property type="entry name" value="PRK05610.1"/>
    <property type="match status" value="1"/>
</dbReference>
<dbReference type="NCBIfam" id="TIGR03635">
    <property type="entry name" value="uS17_bact"/>
    <property type="match status" value="1"/>
</dbReference>
<dbReference type="PANTHER" id="PTHR10744">
    <property type="entry name" value="40S RIBOSOMAL PROTEIN S11 FAMILY MEMBER"/>
    <property type="match status" value="1"/>
</dbReference>
<dbReference type="PANTHER" id="PTHR10744:SF1">
    <property type="entry name" value="SMALL RIBOSOMAL SUBUNIT PROTEIN US17M"/>
    <property type="match status" value="1"/>
</dbReference>
<dbReference type="Pfam" id="PF00366">
    <property type="entry name" value="Ribosomal_S17"/>
    <property type="match status" value="1"/>
</dbReference>
<dbReference type="PRINTS" id="PR00973">
    <property type="entry name" value="RIBOSOMALS17"/>
</dbReference>
<dbReference type="SUPFAM" id="SSF50249">
    <property type="entry name" value="Nucleic acid-binding proteins"/>
    <property type="match status" value="1"/>
</dbReference>